<feature type="chain" id="PRO_1000132209" description="Probable transcriptional regulatory protein LBF_0056">
    <location>
        <begin position="1"/>
        <end position="247"/>
    </location>
</feature>
<sequence length="247" mass="26590">MSGHSKWATIRRKKGAIDAKRGAIFTRIAKEISVAAKEGGGDQEGNPRLRLAVTKAKAANMPKDNIERAIKKGTGGLEGMVYEECLYECYAPGGVAIMVDVLTDKKSRTTPEIKSILTKLGGSLANAGAVSRLFERKGQLTLKADQISEEALFDLALGAGAEDIQVNDGMYVVLTSPSEYEAVQSALSSKGLNMEESEIKYIPMTTVEVNEKETAEKVMKLIENLEANDDVQGVSSNFELGEGVELD</sequence>
<reference key="1">
    <citation type="journal article" date="2008" name="PLoS ONE">
        <title>Genome sequence of the saprophyte Leptospira biflexa provides insights into the evolution of Leptospira and the pathogenesis of leptospirosis.</title>
        <authorList>
            <person name="Picardeau M."/>
            <person name="Bulach D.M."/>
            <person name="Bouchier C."/>
            <person name="Zuerner R.L."/>
            <person name="Zidane N."/>
            <person name="Wilson P.J."/>
            <person name="Creno S."/>
            <person name="Kuczek E.S."/>
            <person name="Bommezzadri S."/>
            <person name="Davis J.C."/>
            <person name="McGrath A."/>
            <person name="Johnson M.J."/>
            <person name="Boursaux-Eude C."/>
            <person name="Seemann T."/>
            <person name="Rouy Z."/>
            <person name="Coppel R.L."/>
            <person name="Rood J.I."/>
            <person name="Lajus A."/>
            <person name="Davies J.K."/>
            <person name="Medigue C."/>
            <person name="Adler B."/>
        </authorList>
    </citation>
    <scope>NUCLEOTIDE SEQUENCE [LARGE SCALE GENOMIC DNA]</scope>
    <source>
        <strain>Patoc 1 / Ames</strain>
    </source>
</reference>
<evidence type="ECO:0000255" key="1">
    <source>
        <dbReference type="HAMAP-Rule" id="MF_00693"/>
    </source>
</evidence>
<gene>
    <name type="ordered locus">LBF_0056</name>
</gene>
<protein>
    <recommendedName>
        <fullName evidence="1">Probable transcriptional regulatory protein LBF_0056</fullName>
    </recommendedName>
</protein>
<proteinExistence type="inferred from homology"/>
<name>Y056_LEPBA</name>
<comment type="subcellular location">
    <subcellularLocation>
        <location evidence="1">Cytoplasm</location>
    </subcellularLocation>
</comment>
<comment type="similarity">
    <text evidence="1">Belongs to the TACO1 family.</text>
</comment>
<keyword id="KW-0963">Cytoplasm</keyword>
<keyword id="KW-0238">DNA-binding</keyword>
<keyword id="KW-0804">Transcription</keyword>
<keyword id="KW-0805">Transcription regulation</keyword>
<dbReference type="EMBL" id="CP000777">
    <property type="protein sequence ID" value="ABZ92603.1"/>
    <property type="molecule type" value="Genomic_DNA"/>
</dbReference>
<dbReference type="RefSeq" id="WP_012387093.1">
    <property type="nucleotide sequence ID" value="NC_010842.1"/>
</dbReference>
<dbReference type="SMR" id="B0S959"/>
<dbReference type="KEGG" id="lbf:LBF_0056"/>
<dbReference type="HOGENOM" id="CLU_062974_2_2_12"/>
<dbReference type="GO" id="GO:0005829">
    <property type="term" value="C:cytosol"/>
    <property type="evidence" value="ECO:0007669"/>
    <property type="project" value="TreeGrafter"/>
</dbReference>
<dbReference type="GO" id="GO:0003677">
    <property type="term" value="F:DNA binding"/>
    <property type="evidence" value="ECO:0007669"/>
    <property type="project" value="UniProtKB-UniRule"/>
</dbReference>
<dbReference type="GO" id="GO:0006355">
    <property type="term" value="P:regulation of DNA-templated transcription"/>
    <property type="evidence" value="ECO:0007669"/>
    <property type="project" value="UniProtKB-UniRule"/>
</dbReference>
<dbReference type="FunFam" id="1.10.10.200:FF:000002">
    <property type="entry name" value="Probable transcriptional regulatory protein CLM62_37755"/>
    <property type="match status" value="1"/>
</dbReference>
<dbReference type="FunFam" id="3.30.70.980:FF:000002">
    <property type="entry name" value="Probable transcriptional regulatory protein YebC"/>
    <property type="match status" value="1"/>
</dbReference>
<dbReference type="Gene3D" id="1.10.10.200">
    <property type="match status" value="1"/>
</dbReference>
<dbReference type="Gene3D" id="3.30.70.980">
    <property type="match status" value="2"/>
</dbReference>
<dbReference type="HAMAP" id="MF_00693">
    <property type="entry name" value="Transcrip_reg_TACO1"/>
    <property type="match status" value="1"/>
</dbReference>
<dbReference type="InterPro" id="IPR017856">
    <property type="entry name" value="Integrase-like_N"/>
</dbReference>
<dbReference type="InterPro" id="IPR048300">
    <property type="entry name" value="TACO1_YebC-like_2nd/3rd_dom"/>
</dbReference>
<dbReference type="InterPro" id="IPR049083">
    <property type="entry name" value="TACO1_YebC_N"/>
</dbReference>
<dbReference type="InterPro" id="IPR002876">
    <property type="entry name" value="Transcrip_reg_TACO1-like"/>
</dbReference>
<dbReference type="InterPro" id="IPR026564">
    <property type="entry name" value="Transcrip_reg_TACO1-like_dom3"/>
</dbReference>
<dbReference type="InterPro" id="IPR029072">
    <property type="entry name" value="YebC-like"/>
</dbReference>
<dbReference type="NCBIfam" id="NF001030">
    <property type="entry name" value="PRK00110.1"/>
    <property type="match status" value="1"/>
</dbReference>
<dbReference type="NCBIfam" id="NF009044">
    <property type="entry name" value="PRK12378.1"/>
    <property type="match status" value="1"/>
</dbReference>
<dbReference type="NCBIfam" id="TIGR01033">
    <property type="entry name" value="YebC/PmpR family DNA-binding transcriptional regulator"/>
    <property type="match status" value="1"/>
</dbReference>
<dbReference type="PANTHER" id="PTHR12532:SF6">
    <property type="entry name" value="TRANSCRIPTIONAL REGULATORY PROTEIN YEBC-RELATED"/>
    <property type="match status" value="1"/>
</dbReference>
<dbReference type="PANTHER" id="PTHR12532">
    <property type="entry name" value="TRANSLATIONAL ACTIVATOR OF CYTOCHROME C OXIDASE 1"/>
    <property type="match status" value="1"/>
</dbReference>
<dbReference type="Pfam" id="PF20772">
    <property type="entry name" value="TACO1_YebC_N"/>
    <property type="match status" value="1"/>
</dbReference>
<dbReference type="Pfam" id="PF01709">
    <property type="entry name" value="Transcrip_reg"/>
    <property type="match status" value="1"/>
</dbReference>
<dbReference type="SUPFAM" id="SSF75625">
    <property type="entry name" value="YebC-like"/>
    <property type="match status" value="1"/>
</dbReference>
<accession>B0S959</accession>
<organism>
    <name type="scientific">Leptospira biflexa serovar Patoc (strain Patoc 1 / Ames)</name>
    <dbReference type="NCBI Taxonomy" id="355278"/>
    <lineage>
        <taxon>Bacteria</taxon>
        <taxon>Pseudomonadati</taxon>
        <taxon>Spirochaetota</taxon>
        <taxon>Spirochaetia</taxon>
        <taxon>Leptospirales</taxon>
        <taxon>Leptospiraceae</taxon>
        <taxon>Leptospira</taxon>
    </lineage>
</organism>